<comment type="function">
    <text evidence="1">Cell wall formation. Adds enolpyruvyl to UDP-N-acetylglucosamine.</text>
</comment>
<comment type="catalytic activity">
    <reaction evidence="1">
        <text>phosphoenolpyruvate + UDP-N-acetyl-alpha-D-glucosamine = UDP-N-acetyl-3-O-(1-carboxyvinyl)-alpha-D-glucosamine + phosphate</text>
        <dbReference type="Rhea" id="RHEA:18681"/>
        <dbReference type="ChEBI" id="CHEBI:43474"/>
        <dbReference type="ChEBI" id="CHEBI:57705"/>
        <dbReference type="ChEBI" id="CHEBI:58702"/>
        <dbReference type="ChEBI" id="CHEBI:68483"/>
        <dbReference type="EC" id="2.5.1.7"/>
    </reaction>
</comment>
<comment type="pathway">
    <text evidence="1">Cell wall biogenesis; peptidoglycan biosynthesis.</text>
</comment>
<comment type="subcellular location">
    <subcellularLocation>
        <location evidence="1">Cytoplasm</location>
    </subcellularLocation>
</comment>
<comment type="similarity">
    <text evidence="1">Belongs to the EPSP synthase family. MurA subfamily.</text>
</comment>
<dbReference type="EC" id="2.5.1.7" evidence="1"/>
<dbReference type="EMBL" id="CP000812">
    <property type="protein sequence ID" value="ABV34174.1"/>
    <property type="molecule type" value="Genomic_DNA"/>
</dbReference>
<dbReference type="RefSeq" id="WP_012003650.1">
    <property type="nucleotide sequence ID" value="NZ_BSDV01000001.1"/>
</dbReference>
<dbReference type="SMR" id="A8F7P0"/>
<dbReference type="STRING" id="416591.Tlet_1620"/>
<dbReference type="KEGG" id="tle:Tlet_1620"/>
<dbReference type="eggNOG" id="COG0766">
    <property type="taxonomic scope" value="Bacteria"/>
</dbReference>
<dbReference type="HOGENOM" id="CLU_027387_0_0_0"/>
<dbReference type="OrthoDB" id="9803760at2"/>
<dbReference type="UniPathway" id="UPA00219"/>
<dbReference type="Proteomes" id="UP000002016">
    <property type="component" value="Chromosome"/>
</dbReference>
<dbReference type="GO" id="GO:0005737">
    <property type="term" value="C:cytoplasm"/>
    <property type="evidence" value="ECO:0007669"/>
    <property type="project" value="UniProtKB-SubCell"/>
</dbReference>
<dbReference type="GO" id="GO:0008760">
    <property type="term" value="F:UDP-N-acetylglucosamine 1-carboxyvinyltransferase activity"/>
    <property type="evidence" value="ECO:0007669"/>
    <property type="project" value="UniProtKB-UniRule"/>
</dbReference>
<dbReference type="GO" id="GO:0051301">
    <property type="term" value="P:cell division"/>
    <property type="evidence" value="ECO:0007669"/>
    <property type="project" value="UniProtKB-KW"/>
</dbReference>
<dbReference type="GO" id="GO:0071555">
    <property type="term" value="P:cell wall organization"/>
    <property type="evidence" value="ECO:0007669"/>
    <property type="project" value="UniProtKB-KW"/>
</dbReference>
<dbReference type="GO" id="GO:0009252">
    <property type="term" value="P:peptidoglycan biosynthetic process"/>
    <property type="evidence" value="ECO:0007669"/>
    <property type="project" value="UniProtKB-UniRule"/>
</dbReference>
<dbReference type="GO" id="GO:0008360">
    <property type="term" value="P:regulation of cell shape"/>
    <property type="evidence" value="ECO:0007669"/>
    <property type="project" value="UniProtKB-KW"/>
</dbReference>
<dbReference type="GO" id="GO:0019277">
    <property type="term" value="P:UDP-N-acetylgalactosamine biosynthetic process"/>
    <property type="evidence" value="ECO:0007669"/>
    <property type="project" value="InterPro"/>
</dbReference>
<dbReference type="CDD" id="cd01555">
    <property type="entry name" value="UdpNAET"/>
    <property type="match status" value="1"/>
</dbReference>
<dbReference type="Gene3D" id="3.65.10.10">
    <property type="entry name" value="Enolpyruvate transferase domain"/>
    <property type="match status" value="2"/>
</dbReference>
<dbReference type="HAMAP" id="MF_00111">
    <property type="entry name" value="MurA"/>
    <property type="match status" value="1"/>
</dbReference>
<dbReference type="InterPro" id="IPR001986">
    <property type="entry name" value="Enolpyruvate_Tfrase_dom"/>
</dbReference>
<dbReference type="InterPro" id="IPR036968">
    <property type="entry name" value="Enolpyruvate_Tfrase_sf"/>
</dbReference>
<dbReference type="InterPro" id="IPR050068">
    <property type="entry name" value="MurA_subfamily"/>
</dbReference>
<dbReference type="InterPro" id="IPR013792">
    <property type="entry name" value="RNA3'P_cycl/enolpyr_Trfase_a/b"/>
</dbReference>
<dbReference type="InterPro" id="IPR005750">
    <property type="entry name" value="UDP_GlcNAc_COvinyl_MurA"/>
</dbReference>
<dbReference type="NCBIfam" id="TIGR01072">
    <property type="entry name" value="murA"/>
    <property type="match status" value="1"/>
</dbReference>
<dbReference type="NCBIfam" id="NF006873">
    <property type="entry name" value="PRK09369.1"/>
    <property type="match status" value="1"/>
</dbReference>
<dbReference type="PANTHER" id="PTHR43783">
    <property type="entry name" value="UDP-N-ACETYLGLUCOSAMINE 1-CARBOXYVINYLTRANSFERASE"/>
    <property type="match status" value="1"/>
</dbReference>
<dbReference type="PANTHER" id="PTHR43783:SF1">
    <property type="entry name" value="UDP-N-ACETYLGLUCOSAMINE 1-CARBOXYVINYLTRANSFERASE"/>
    <property type="match status" value="1"/>
</dbReference>
<dbReference type="Pfam" id="PF00275">
    <property type="entry name" value="EPSP_synthase"/>
    <property type="match status" value="1"/>
</dbReference>
<dbReference type="SUPFAM" id="SSF55205">
    <property type="entry name" value="EPT/RTPC-like"/>
    <property type="match status" value="1"/>
</dbReference>
<reference key="1">
    <citation type="submission" date="2007-08" db="EMBL/GenBank/DDBJ databases">
        <title>Complete sequence of Thermotoga lettingae TMO.</title>
        <authorList>
            <consortium name="US DOE Joint Genome Institute"/>
            <person name="Copeland A."/>
            <person name="Lucas S."/>
            <person name="Lapidus A."/>
            <person name="Barry K."/>
            <person name="Glavina del Rio T."/>
            <person name="Dalin E."/>
            <person name="Tice H."/>
            <person name="Pitluck S."/>
            <person name="Foster B."/>
            <person name="Bruce D."/>
            <person name="Schmutz J."/>
            <person name="Larimer F."/>
            <person name="Land M."/>
            <person name="Hauser L."/>
            <person name="Kyrpides N."/>
            <person name="Mikhailova N."/>
            <person name="Nelson K."/>
            <person name="Gogarten J.P."/>
            <person name="Noll K."/>
            <person name="Richardson P."/>
        </authorList>
    </citation>
    <scope>NUCLEOTIDE SEQUENCE [LARGE SCALE GENOMIC DNA]</scope>
    <source>
        <strain>ATCC BAA-301 / DSM 14385 / NBRC 107922 / TMO</strain>
    </source>
</reference>
<keyword id="KW-0131">Cell cycle</keyword>
<keyword id="KW-0132">Cell division</keyword>
<keyword id="KW-0133">Cell shape</keyword>
<keyword id="KW-0961">Cell wall biogenesis/degradation</keyword>
<keyword id="KW-0963">Cytoplasm</keyword>
<keyword id="KW-0573">Peptidoglycan synthesis</keyword>
<keyword id="KW-0670">Pyruvate</keyword>
<keyword id="KW-1185">Reference proteome</keyword>
<keyword id="KW-0808">Transferase</keyword>
<gene>
    <name evidence="1" type="primary">murA</name>
    <name type="ordered locus">Tlet_1620</name>
</gene>
<proteinExistence type="inferred from homology"/>
<accession>A8F7P0</accession>
<organism>
    <name type="scientific">Pseudothermotoga lettingae (strain ATCC BAA-301 / DSM 14385 / NBRC 107922 / TMO)</name>
    <name type="common">Thermotoga lettingae</name>
    <dbReference type="NCBI Taxonomy" id="416591"/>
    <lineage>
        <taxon>Bacteria</taxon>
        <taxon>Thermotogati</taxon>
        <taxon>Thermotogota</taxon>
        <taxon>Thermotogae</taxon>
        <taxon>Thermotogales</taxon>
        <taxon>Thermotogaceae</taxon>
        <taxon>Pseudothermotoga</taxon>
    </lineage>
</organism>
<sequence length="419" mass="45233">MGKLIIEGPARLNGAVKISGSKNAALPIIAASLICDRGVLLENVPDLMDVRTMIDILNSAGCKTRFAENVLSVNPPEKPNTDIPYELVRKMRASFNVLGPLAAKYGKASVSLPGGCSIGVRPVDYHIEGLQKLGFSINIEHGIVTAELGERPQEVLISLPFPSVGATEHIMTTAAILDGTHTILENAAMEPEIEDLANFLNDMGCKVFGAGTRRIEIFGVEKTRECTHRIIPDRIEAGTYAIAVAATMGDAVIENLQVSHLVALFDVLRSAGVEIQQIDETAIRIKMNQRPQPVKVQITPYPGYPTDLQPQIITFLSIATGTSTVSETVFKSRFQHVDELRRLGAKIEVNDGTAIIYGVENLSGAQVNATDLRAAAALVIAGLMASGTTSINEVDQIFRGYENIVEKLSRLSAVVEYFE</sequence>
<feature type="chain" id="PRO_1000057734" description="UDP-N-acetylglucosamine 1-carboxyvinyltransferase">
    <location>
        <begin position="1"/>
        <end position="419"/>
    </location>
</feature>
<feature type="active site" description="Proton donor" evidence="1">
    <location>
        <position position="116"/>
    </location>
</feature>
<feature type="binding site" evidence="1">
    <location>
        <begin position="22"/>
        <end position="23"/>
    </location>
    <ligand>
        <name>phosphoenolpyruvate</name>
        <dbReference type="ChEBI" id="CHEBI:58702"/>
    </ligand>
</feature>
<feature type="binding site" evidence="1">
    <location>
        <position position="92"/>
    </location>
    <ligand>
        <name>UDP-N-acetyl-alpha-D-glucosamine</name>
        <dbReference type="ChEBI" id="CHEBI:57705"/>
    </ligand>
</feature>
<feature type="binding site" evidence="1">
    <location>
        <position position="307"/>
    </location>
    <ligand>
        <name>UDP-N-acetyl-alpha-D-glucosamine</name>
        <dbReference type="ChEBI" id="CHEBI:57705"/>
    </ligand>
</feature>
<feature type="binding site" evidence="1">
    <location>
        <position position="329"/>
    </location>
    <ligand>
        <name>UDP-N-acetyl-alpha-D-glucosamine</name>
        <dbReference type="ChEBI" id="CHEBI:57705"/>
    </ligand>
</feature>
<feature type="modified residue" description="2-(S-cysteinyl)pyruvic acid O-phosphothioketal" evidence="1">
    <location>
        <position position="116"/>
    </location>
</feature>
<protein>
    <recommendedName>
        <fullName evidence="1">UDP-N-acetylglucosamine 1-carboxyvinyltransferase</fullName>
        <ecNumber evidence="1">2.5.1.7</ecNumber>
    </recommendedName>
    <alternativeName>
        <fullName evidence="1">Enoylpyruvate transferase</fullName>
    </alternativeName>
    <alternativeName>
        <fullName evidence="1">UDP-N-acetylglucosamine enolpyruvyl transferase</fullName>
        <shortName evidence="1">EPT</shortName>
    </alternativeName>
</protein>
<name>MURA_PSELT</name>
<evidence type="ECO:0000255" key="1">
    <source>
        <dbReference type="HAMAP-Rule" id="MF_00111"/>
    </source>
</evidence>